<evidence type="ECO:0000255" key="1">
    <source>
        <dbReference type="HAMAP-Rule" id="MF_00405"/>
    </source>
</evidence>
<organism>
    <name type="scientific">Afipia carboxidovorans (strain ATCC 49405 / DSM 1227 / KCTC 32145 / OM5)</name>
    <name type="common">Oligotropha carboxidovorans</name>
    <dbReference type="NCBI Taxonomy" id="504832"/>
    <lineage>
        <taxon>Bacteria</taxon>
        <taxon>Pseudomonadati</taxon>
        <taxon>Pseudomonadota</taxon>
        <taxon>Alphaproteobacteria</taxon>
        <taxon>Hyphomicrobiales</taxon>
        <taxon>Nitrobacteraceae</taxon>
        <taxon>Afipia</taxon>
    </lineage>
</organism>
<feature type="chain" id="PRO_1000201192" description="3-hydroxydecanoyl-[acyl-carrier-protein] dehydratase">
    <location>
        <begin position="1"/>
        <end position="176"/>
    </location>
</feature>
<feature type="active site" evidence="1">
    <location>
        <position position="71"/>
    </location>
</feature>
<proteinExistence type="inferred from homology"/>
<comment type="function">
    <text evidence="1">Necessary for the introduction of cis unsaturation into fatty acids. Catalyzes the dehydration of (3R)-3-hydroxydecanoyl-ACP to E-(2)-decenoyl-ACP and then its isomerization to Z-(3)-decenoyl-ACP. Can catalyze the dehydratase reaction for beta-hydroxyacyl-ACPs with saturated chain lengths up to 16:0, being most active on intermediate chain length.</text>
</comment>
<comment type="catalytic activity">
    <reaction evidence="1">
        <text>a (3R)-hydroxyacyl-[ACP] = a (2E)-enoyl-[ACP] + H2O</text>
        <dbReference type="Rhea" id="RHEA:13097"/>
        <dbReference type="Rhea" id="RHEA-COMP:9925"/>
        <dbReference type="Rhea" id="RHEA-COMP:9945"/>
        <dbReference type="ChEBI" id="CHEBI:15377"/>
        <dbReference type="ChEBI" id="CHEBI:78784"/>
        <dbReference type="ChEBI" id="CHEBI:78827"/>
        <dbReference type="EC" id="4.2.1.59"/>
    </reaction>
</comment>
<comment type="catalytic activity">
    <reaction evidence="1">
        <text>(3R)-hydroxydecanoyl-[ACP] = (2E)-decenoyl-[ACP] + H2O</text>
        <dbReference type="Rhea" id="RHEA:41860"/>
        <dbReference type="Rhea" id="RHEA-COMP:9638"/>
        <dbReference type="Rhea" id="RHEA-COMP:9639"/>
        <dbReference type="ChEBI" id="CHEBI:15377"/>
        <dbReference type="ChEBI" id="CHEBI:78466"/>
        <dbReference type="ChEBI" id="CHEBI:78467"/>
    </reaction>
</comment>
<comment type="catalytic activity">
    <reaction evidence="1">
        <text>(2E)-decenoyl-[ACP] = (3Z)-decenoyl-[ACP]</text>
        <dbReference type="Rhea" id="RHEA:23568"/>
        <dbReference type="Rhea" id="RHEA-COMP:9639"/>
        <dbReference type="Rhea" id="RHEA-COMP:9927"/>
        <dbReference type="ChEBI" id="CHEBI:78467"/>
        <dbReference type="ChEBI" id="CHEBI:78798"/>
        <dbReference type="EC" id="5.3.3.14"/>
    </reaction>
</comment>
<comment type="pathway">
    <text evidence="1">Lipid metabolism; fatty acid biosynthesis.</text>
</comment>
<comment type="subunit">
    <text evidence="1">Homodimer.</text>
</comment>
<comment type="subcellular location">
    <subcellularLocation>
        <location evidence="1">Cytoplasm</location>
    </subcellularLocation>
</comment>
<comment type="similarity">
    <text evidence="1">Belongs to the thioester dehydratase family. FabA subfamily.</text>
</comment>
<reference key="1">
    <citation type="journal article" date="2008" name="J. Bacteriol.">
        <title>Genome sequence of the chemolithoautotrophic bacterium Oligotropha carboxidovorans OM5T.</title>
        <authorList>
            <person name="Paul D."/>
            <person name="Bridges S."/>
            <person name="Burgess S.C."/>
            <person name="Dandass Y."/>
            <person name="Lawrence M.L."/>
        </authorList>
    </citation>
    <scope>NUCLEOTIDE SEQUENCE [LARGE SCALE GENOMIC DNA]</scope>
    <source>
        <strain>ATCC 49405 / DSM 1227 / KCTC 32145 / OM5</strain>
    </source>
</reference>
<reference key="2">
    <citation type="journal article" date="2011" name="J. Bacteriol.">
        <title>Complete genome sequences of the chemolithoautotrophic Oligotropha carboxidovorans strains OM4 and OM5.</title>
        <authorList>
            <person name="Volland S."/>
            <person name="Rachinger M."/>
            <person name="Strittmatter A."/>
            <person name="Daniel R."/>
            <person name="Gottschalk G."/>
            <person name="Meyer O."/>
        </authorList>
    </citation>
    <scope>NUCLEOTIDE SEQUENCE [LARGE SCALE GENOMIC DNA]</scope>
    <source>
        <strain>ATCC 49405 / DSM 1227 / KCTC 32145 / OM5</strain>
    </source>
</reference>
<name>FABA_AFIC5</name>
<sequence length="176" mass="19468">MRERQNSYEYEDLLACGRGELFGPGNAQLPLPPMLMFDRIVEITETGGEFGKGVIRAELDVKPDLWFFGCHFKGDPVMPGCLGLDALWQMVGFFLGWTGGSGRGRALGLGDLKFSGQVLPHVMRVQYHIDMKRIMRSRLVLGVADGWLSTDGEIIYRATDLKVGLFQQDAAAQAGK</sequence>
<protein>
    <recommendedName>
        <fullName evidence="1">3-hydroxydecanoyl-[acyl-carrier-protein] dehydratase</fullName>
        <ecNumber evidence="1">4.2.1.59</ecNumber>
    </recommendedName>
    <alternativeName>
        <fullName evidence="1">3-hydroxyacyl-[acyl-carrier-protein] dehydratase FabA</fullName>
    </alternativeName>
    <alternativeName>
        <fullName evidence="1">Beta-hydroxydecanoyl thioester dehydrase</fullName>
    </alternativeName>
    <alternativeName>
        <fullName evidence="1">Trans-2-decenoyl-[acyl-carrier-protein] isomerase</fullName>
        <ecNumber evidence="1">5.3.3.14</ecNumber>
    </alternativeName>
</protein>
<accession>B6JCR2</accession>
<accession>F8BZN7</accession>
<gene>
    <name evidence="1" type="primary">fabA</name>
    <name type="ordered locus">OCAR_4497</name>
    <name type="ordered locus">OCA5_c00370</name>
</gene>
<dbReference type="EC" id="4.2.1.59" evidence="1"/>
<dbReference type="EC" id="5.3.3.14" evidence="1"/>
<dbReference type="EMBL" id="CP001196">
    <property type="protein sequence ID" value="ACI91642.1"/>
    <property type="molecule type" value="Genomic_DNA"/>
</dbReference>
<dbReference type="EMBL" id="CP002826">
    <property type="protein sequence ID" value="AEI04771.1"/>
    <property type="molecule type" value="Genomic_DNA"/>
</dbReference>
<dbReference type="RefSeq" id="WP_012561673.1">
    <property type="nucleotide sequence ID" value="NC_015684.1"/>
</dbReference>
<dbReference type="SMR" id="B6JCR2"/>
<dbReference type="STRING" id="504832.OCA5_c00370"/>
<dbReference type="KEGG" id="oca:OCAR_4497"/>
<dbReference type="KEGG" id="ocg:OCA5_c00370"/>
<dbReference type="PATRIC" id="fig|504832.7.peg.40"/>
<dbReference type="eggNOG" id="COG0764">
    <property type="taxonomic scope" value="Bacteria"/>
</dbReference>
<dbReference type="HOGENOM" id="CLU_097925_0_0_5"/>
<dbReference type="OrthoDB" id="9786735at2"/>
<dbReference type="UniPathway" id="UPA00094"/>
<dbReference type="Proteomes" id="UP000007730">
    <property type="component" value="Chromosome"/>
</dbReference>
<dbReference type="GO" id="GO:0005737">
    <property type="term" value="C:cytoplasm"/>
    <property type="evidence" value="ECO:0007669"/>
    <property type="project" value="UniProtKB-SubCell"/>
</dbReference>
<dbReference type="GO" id="GO:0019171">
    <property type="term" value="F:(3R)-hydroxyacyl-[acyl-carrier-protein] dehydratase activity"/>
    <property type="evidence" value="ECO:0007669"/>
    <property type="project" value="UniProtKB-UniRule"/>
</dbReference>
<dbReference type="GO" id="GO:0034017">
    <property type="term" value="F:trans-2-decenoyl-acyl-carrier-protein isomerase activity"/>
    <property type="evidence" value="ECO:0007669"/>
    <property type="project" value="UniProtKB-UniRule"/>
</dbReference>
<dbReference type="GO" id="GO:0006636">
    <property type="term" value="P:unsaturated fatty acid biosynthetic process"/>
    <property type="evidence" value="ECO:0007669"/>
    <property type="project" value="UniProtKB-UniRule"/>
</dbReference>
<dbReference type="CDD" id="cd01287">
    <property type="entry name" value="FabA"/>
    <property type="match status" value="1"/>
</dbReference>
<dbReference type="Gene3D" id="3.10.129.10">
    <property type="entry name" value="Hotdog Thioesterase"/>
    <property type="match status" value="1"/>
</dbReference>
<dbReference type="HAMAP" id="MF_00405">
    <property type="entry name" value="FabA"/>
    <property type="match status" value="1"/>
</dbReference>
<dbReference type="InterPro" id="IPR010083">
    <property type="entry name" value="FabA"/>
</dbReference>
<dbReference type="InterPro" id="IPR013114">
    <property type="entry name" value="FabA_FabZ"/>
</dbReference>
<dbReference type="InterPro" id="IPR029069">
    <property type="entry name" value="HotDog_dom_sf"/>
</dbReference>
<dbReference type="NCBIfam" id="TIGR01749">
    <property type="entry name" value="fabA"/>
    <property type="match status" value="1"/>
</dbReference>
<dbReference type="NCBIfam" id="NF003509">
    <property type="entry name" value="PRK05174.1"/>
    <property type="match status" value="1"/>
</dbReference>
<dbReference type="PANTHER" id="PTHR30272">
    <property type="entry name" value="3-HYDROXYACYL-[ACYL-CARRIER-PROTEIN] DEHYDRATASE"/>
    <property type="match status" value="1"/>
</dbReference>
<dbReference type="PANTHER" id="PTHR30272:SF8">
    <property type="entry name" value="3-HYDROXYDECANOYL-[ACYL-CARRIER-PROTEIN] DEHYDRATASE"/>
    <property type="match status" value="1"/>
</dbReference>
<dbReference type="Pfam" id="PF07977">
    <property type="entry name" value="FabA"/>
    <property type="match status" value="1"/>
</dbReference>
<dbReference type="SUPFAM" id="SSF54637">
    <property type="entry name" value="Thioesterase/thiol ester dehydrase-isomerase"/>
    <property type="match status" value="1"/>
</dbReference>
<keyword id="KW-0963">Cytoplasm</keyword>
<keyword id="KW-0275">Fatty acid biosynthesis</keyword>
<keyword id="KW-0276">Fatty acid metabolism</keyword>
<keyword id="KW-0413">Isomerase</keyword>
<keyword id="KW-0444">Lipid biosynthesis</keyword>
<keyword id="KW-0443">Lipid metabolism</keyword>
<keyword id="KW-0456">Lyase</keyword>
<keyword id="KW-1185">Reference proteome</keyword>